<organism>
    <name type="scientific">Human immunodeficiency virus type 2 subtype A (isolate Ghana-1)</name>
    <name type="common">HIV-2</name>
    <dbReference type="NCBI Taxonomy" id="11717"/>
    <lineage>
        <taxon>Viruses</taxon>
        <taxon>Riboviria</taxon>
        <taxon>Pararnavirae</taxon>
        <taxon>Artverviricota</taxon>
        <taxon>Revtraviricetes</taxon>
        <taxon>Ortervirales</taxon>
        <taxon>Retroviridae</taxon>
        <taxon>Orthoretrovirinae</taxon>
        <taxon>Lentivirus</taxon>
        <taxon>Human immunodeficiency virus 2</taxon>
    </lineage>
</organism>
<feature type="chain" id="PRO_0000085393" description="Protein Vpx">
    <location>
        <begin position="1"/>
        <end position="112"/>
    </location>
</feature>
<feature type="region of interest" description="Binds to human NUP153" evidence="4">
    <location>
        <begin position="61"/>
        <end position="80"/>
    </location>
</feature>
<feature type="short sequence motif" description="Nuclear localization signal" evidence="1">
    <location>
        <begin position="65"/>
        <end position="72"/>
    </location>
</feature>
<comment type="function">
    <text evidence="1">Plays a role in nuclear translocation of the viral pre-integration complex (PIC), thus is required for the virus to infect non-dividing cells. Targets specific host proteins for degradation by the 26S proteasome. Acts by associating with the cellular CUL4A-DDB1 E3 ligase complex through direct interaction with host VPRPB/DCAF-1. This change in the E3 ligase substrate specificity results in the degradation of host SAMHD1. In turn, SAMHD1 depletion allows viral replication in host myeloid cells by preventing SAMHD1-mediated hydrolysis of intracellular dNTPs necessary for reverse transcription (By similarity).</text>
</comment>
<comment type="subunit">
    <text evidence="1 2 3">Interacts with the P6 region of unprocessed GAG (By similarity). Interacts with host VPRBP/DCAF1, leading to change substrate specificity of the CUL4A-DDB1 E3 ligase complex (By similarity). Interacts with host NUP153 (By similarity).</text>
</comment>
<comment type="interaction">
    <interactant intactId="EBI-6558105">
        <id>P18045</id>
    </interactant>
    <interactant intactId="EBI-6558105">
        <id>P18045</id>
        <label>vpx</label>
    </interactant>
    <organismsDiffer>false</organismsDiffer>
    <experiments>5</experiments>
</comment>
<comment type="interaction">
    <interactant intactId="EBI-6558105">
        <id>P18045</id>
    </interactant>
    <interactant intactId="EBI-1996353">
        <id>Q9Y4B6</id>
        <label>DCAF1</label>
    </interactant>
    <organismsDiffer>true</organismsDiffer>
    <experiments>2</experiments>
</comment>
<comment type="interaction">
    <interactant intactId="EBI-6558105">
        <id>P18045</id>
    </interactant>
    <interactant intactId="EBI-350322">
        <id>Q16531</id>
        <label>DDB1</label>
    </interactant>
    <organismsDiffer>true</organismsDiffer>
    <experiments>2</experiments>
</comment>
<comment type="subcellular location">
    <subcellularLocation>
        <location>Virion</location>
    </subcellularLocation>
    <subcellularLocation>
        <location>Host nucleus</location>
    </subcellularLocation>
    <text evidence="1">Nuclear just after virion uncoating, or if expressed in the absence of unprocessed GAG.</text>
</comment>
<comment type="similarity">
    <text evidence="5">Belongs to the lentivirus VPX protein family.</text>
</comment>
<organismHost>
    <name type="scientific">Homo sapiens</name>
    <name type="common">Human</name>
    <dbReference type="NCBI Taxonomy" id="9606"/>
</organismHost>
<dbReference type="EMBL" id="M30895">
    <property type="protein sequence ID" value="AAA43935.1"/>
    <property type="molecule type" value="Genomic_DNA"/>
</dbReference>
<dbReference type="PIR" id="JS0330">
    <property type="entry name" value="ASLJGH"/>
</dbReference>
<dbReference type="SMR" id="P18045"/>
<dbReference type="IntAct" id="P18045">
    <property type="interactions" value="2"/>
</dbReference>
<dbReference type="MINT" id="P18045"/>
<dbReference type="Proteomes" id="UP000007424">
    <property type="component" value="Segment"/>
</dbReference>
<dbReference type="GO" id="GO:0042025">
    <property type="term" value="C:host cell nucleus"/>
    <property type="evidence" value="ECO:0007669"/>
    <property type="project" value="UniProtKB-SubCell"/>
</dbReference>
<dbReference type="GO" id="GO:0044423">
    <property type="term" value="C:virion component"/>
    <property type="evidence" value="ECO:0007669"/>
    <property type="project" value="UniProtKB-KW"/>
</dbReference>
<dbReference type="GO" id="GO:0042802">
    <property type="term" value="F:identical protein binding"/>
    <property type="evidence" value="ECO:0000353"/>
    <property type="project" value="IntAct"/>
</dbReference>
<dbReference type="GO" id="GO:0052170">
    <property type="term" value="P:symbiont-mediated suppression of host innate immune response"/>
    <property type="evidence" value="ECO:0007669"/>
    <property type="project" value="UniProtKB-KW"/>
</dbReference>
<dbReference type="GO" id="GO:0019058">
    <property type="term" value="P:viral life cycle"/>
    <property type="evidence" value="ECO:0007669"/>
    <property type="project" value="InterPro"/>
</dbReference>
<dbReference type="Gene3D" id="1.20.5.4730">
    <property type="match status" value="1"/>
</dbReference>
<dbReference type="InterPro" id="IPR053711">
    <property type="entry name" value="Lentiviral_Vpx_assoc_factor"/>
</dbReference>
<dbReference type="InterPro" id="IPR000012">
    <property type="entry name" value="RetroV_VpR/X"/>
</dbReference>
<dbReference type="Pfam" id="PF00522">
    <property type="entry name" value="VPR"/>
    <property type="match status" value="1"/>
</dbReference>
<dbReference type="PRINTS" id="PR00444">
    <property type="entry name" value="HIVVPRVPX"/>
</dbReference>
<sequence length="112" mass="12820">MTDPRERVPPGNSGEETIGEAFEWLDRTIEALNREAVNHLPRELIFQVWQRSWRYWHDDQGMSPSYTKYRYLCLMQKAVFIHFKRGCTCLGGGHGPGGWRSGPPPPPPPGLV</sequence>
<keyword id="KW-0014">AIDS</keyword>
<keyword id="KW-1048">Host nucleus</keyword>
<keyword id="KW-0945">Host-virus interaction</keyword>
<keyword id="KW-1090">Inhibition of host innate immune response by virus</keyword>
<keyword id="KW-0899">Viral immunoevasion</keyword>
<keyword id="KW-0946">Virion</keyword>
<gene>
    <name type="primary">vpx</name>
</gene>
<name>VPX_HV2G1</name>
<accession>P18045</accession>
<evidence type="ECO:0000250" key="1"/>
<evidence type="ECO:0000250" key="2">
    <source>
        <dbReference type="UniProtKB" id="P12454"/>
    </source>
</evidence>
<evidence type="ECO:0000250" key="3">
    <source>
        <dbReference type="UniProtKB" id="P18099"/>
    </source>
</evidence>
<evidence type="ECO:0000250" key="4">
    <source>
        <dbReference type="UniProtKB" id="P19508"/>
    </source>
</evidence>
<evidence type="ECO:0000305" key="5"/>
<protein>
    <recommendedName>
        <fullName>Protein Vpx</fullName>
    </recommendedName>
    <alternativeName>
        <fullName>Viral protein X</fullName>
    </alternativeName>
    <alternativeName>
        <fullName>X ORF protein</fullName>
    </alternativeName>
</protein>
<reference key="1">
    <citation type="journal article" date="1989" name="AIDS Res. Hum. Retroviruses">
        <title>Genomic divergence of HIV-2 from Ghana.</title>
        <authorList>
            <person name="Hasegawa A."/>
            <person name="Tsujimoto H."/>
            <person name="Maki N."/>
            <person name="Ishikawa K."/>
            <person name="Miura T."/>
            <person name="Fukasawa M."/>
            <person name="Miki K."/>
            <person name="Hayami M."/>
        </authorList>
    </citation>
    <scope>NUCLEOTIDE SEQUENCE [GENOMIC DNA]</scope>
</reference>
<proteinExistence type="evidence at protein level"/>